<reference key="1">
    <citation type="journal article" date="2007" name="Genome Res.">
        <title>Reductive evolution and niche adaptation inferred from the genome of Mycobacterium ulcerans, the causative agent of Buruli ulcer.</title>
        <authorList>
            <person name="Stinear T.P."/>
            <person name="Seemann T."/>
            <person name="Pidot S."/>
            <person name="Frigui W."/>
            <person name="Reysset G."/>
            <person name="Garnier T."/>
            <person name="Meurice G."/>
            <person name="Simon D."/>
            <person name="Bouchier C."/>
            <person name="Ma L."/>
            <person name="Tichit M."/>
            <person name="Porter J.L."/>
            <person name="Ryan J."/>
            <person name="Johnson P.D.R."/>
            <person name="Davies J.K."/>
            <person name="Jenkin G.A."/>
            <person name="Small P.L.C."/>
            <person name="Jones L.M."/>
            <person name="Tekaia F."/>
            <person name="Laval F."/>
            <person name="Daffe M."/>
            <person name="Parkhill J."/>
            <person name="Cole S.T."/>
        </authorList>
    </citation>
    <scope>NUCLEOTIDE SEQUENCE [LARGE SCALE GENOMIC DNA]</scope>
    <source>
        <strain>Agy99</strain>
    </source>
</reference>
<keyword id="KW-0186">Copper</keyword>
<keyword id="KW-0963">Cytoplasm</keyword>
<keyword id="KW-0238">DNA-binding</keyword>
<keyword id="KW-0479">Metal-binding</keyword>
<keyword id="KW-0678">Repressor</keyword>
<keyword id="KW-0804">Transcription</keyword>
<keyword id="KW-0805">Transcription regulation</keyword>
<protein>
    <recommendedName>
        <fullName>Copper-sensing transcriptional repressor CsoR</fullName>
    </recommendedName>
    <alternativeName>
        <fullName>Copper-sensitive operon repressor</fullName>
    </alternativeName>
</protein>
<feature type="chain" id="PRO_0000295583" description="Copper-sensing transcriptional repressor CsoR">
    <location>
        <begin position="1"/>
        <end position="117"/>
    </location>
</feature>
<feature type="binding site" description="in other chain" evidence="1">
    <location>
        <position position="36"/>
    </location>
    <ligand>
        <name>Cu cation</name>
        <dbReference type="ChEBI" id="CHEBI:23378"/>
        <note>ligand shared between dimeric partners</note>
    </ligand>
</feature>
<feature type="binding site" evidence="1">
    <location>
        <position position="61"/>
    </location>
    <ligand>
        <name>Cu cation</name>
        <dbReference type="ChEBI" id="CHEBI:23378"/>
        <note>ligand shared between dimeric partners</note>
    </ligand>
</feature>
<feature type="binding site" evidence="1">
    <location>
        <position position="65"/>
    </location>
    <ligand>
        <name>Cu cation</name>
        <dbReference type="ChEBI" id="CHEBI:23378"/>
        <note>ligand shared between dimeric partners</note>
    </ligand>
</feature>
<evidence type="ECO:0000250" key="1"/>
<evidence type="ECO:0000305" key="2"/>
<comment type="function">
    <text evidence="1">Copper-sensitive repressor that has a key role in copper homeostasis. It is part of the cso operon involved in the cellular response to increasing concentrations of copper inside the bacterium, which can be highly toxic. In the presence of copper, CsoR fully dissociates from the promoter in the cso operon, leading to the transcription of its genes. Binds to a GC-rich pseudopallindromic sequence, 5'-GTAGCCCACCCCCAGTGGGGTGGGA-3', in the cso promoter region (By similarity).</text>
</comment>
<comment type="subunit">
    <text evidence="1">Homodimer.</text>
</comment>
<comment type="subcellular location">
    <subcellularLocation>
        <location evidence="1">Cytoplasm</location>
    </subcellularLocation>
</comment>
<comment type="domain">
    <text evidence="1">This protein has an antiparallel four-helix bundle architecture that represents a novel DNA-binding fold.</text>
</comment>
<comment type="similarity">
    <text evidence="2">Belongs to the CsoR family.</text>
</comment>
<comment type="sequence caution" evidence="2">
    <conflict type="erroneous initiation">
        <sequence resource="EMBL-CDS" id="ABL03137"/>
    </conflict>
</comment>
<dbReference type="EMBL" id="CP000325">
    <property type="protein sequence ID" value="ABL03137.1"/>
    <property type="status" value="ALT_INIT"/>
    <property type="molecule type" value="Genomic_DNA"/>
</dbReference>
<dbReference type="RefSeq" id="WP_071498077.1">
    <property type="nucleotide sequence ID" value="NC_008611.1"/>
</dbReference>
<dbReference type="SMR" id="A0PLB8"/>
<dbReference type="KEGG" id="mul:MUL_0425"/>
<dbReference type="eggNOG" id="COG1937">
    <property type="taxonomic scope" value="Bacteria"/>
</dbReference>
<dbReference type="HOGENOM" id="CLU_130332_1_1_11"/>
<dbReference type="Proteomes" id="UP000000765">
    <property type="component" value="Chromosome"/>
</dbReference>
<dbReference type="GO" id="GO:0005737">
    <property type="term" value="C:cytoplasm"/>
    <property type="evidence" value="ECO:0007669"/>
    <property type="project" value="UniProtKB-SubCell"/>
</dbReference>
<dbReference type="GO" id="GO:0003677">
    <property type="term" value="F:DNA binding"/>
    <property type="evidence" value="ECO:0007669"/>
    <property type="project" value="UniProtKB-KW"/>
</dbReference>
<dbReference type="GO" id="GO:0046872">
    <property type="term" value="F:metal ion binding"/>
    <property type="evidence" value="ECO:0007669"/>
    <property type="project" value="UniProtKB-KW"/>
</dbReference>
<dbReference type="GO" id="GO:0045892">
    <property type="term" value="P:negative regulation of DNA-templated transcription"/>
    <property type="evidence" value="ECO:0007669"/>
    <property type="project" value="UniProtKB-ARBA"/>
</dbReference>
<dbReference type="CDD" id="cd10151">
    <property type="entry name" value="TthCsoR-like_DUF156"/>
    <property type="match status" value="1"/>
</dbReference>
<dbReference type="FunFam" id="1.20.58.1000:FF:000004">
    <property type="entry name" value="Copper-sensing transcriptional repressor CsoR"/>
    <property type="match status" value="1"/>
</dbReference>
<dbReference type="Gene3D" id="1.20.58.1000">
    <property type="entry name" value="Metal-sensitive repressor, helix protomer"/>
    <property type="match status" value="1"/>
</dbReference>
<dbReference type="InterPro" id="IPR003735">
    <property type="entry name" value="Metal_Tscrpt_repr"/>
</dbReference>
<dbReference type="InterPro" id="IPR038390">
    <property type="entry name" value="Metal_Tscrpt_repr_sf"/>
</dbReference>
<dbReference type="PANTHER" id="PTHR33677:SF4">
    <property type="entry name" value="COPPER-SENSING TRANSCRIPTIONAL REPRESSOR CSOR"/>
    <property type="match status" value="1"/>
</dbReference>
<dbReference type="PANTHER" id="PTHR33677">
    <property type="entry name" value="TRANSCRIPTIONAL REPRESSOR FRMR-RELATED"/>
    <property type="match status" value="1"/>
</dbReference>
<dbReference type="Pfam" id="PF02583">
    <property type="entry name" value="Trns_repr_metal"/>
    <property type="match status" value="1"/>
</dbReference>
<sequence>MSHELTDKKRAALNRLKTARGHLDGIIRMLESDAYCVDVMKQLSAVQSSLERANRVMLHNHLETCFSAAVLDGRGQAAIDELIDAVKFTPALTGPQAQLGGAVVCKPPGDQPAQSPA</sequence>
<gene>
    <name type="primary">csoR</name>
    <name type="ordered locus">MUL_0425</name>
</gene>
<accession>A0PLB8</accession>
<organism>
    <name type="scientific">Mycobacterium ulcerans (strain Agy99)</name>
    <dbReference type="NCBI Taxonomy" id="362242"/>
    <lineage>
        <taxon>Bacteria</taxon>
        <taxon>Bacillati</taxon>
        <taxon>Actinomycetota</taxon>
        <taxon>Actinomycetes</taxon>
        <taxon>Mycobacteriales</taxon>
        <taxon>Mycobacteriaceae</taxon>
        <taxon>Mycobacterium</taxon>
        <taxon>Mycobacterium ulcerans group</taxon>
    </lineage>
</organism>
<name>CSOR_MYCUA</name>
<proteinExistence type="inferred from homology"/>